<evidence type="ECO:0000255" key="1">
    <source>
        <dbReference type="HAMAP-Rule" id="MF_01197"/>
    </source>
</evidence>
<evidence type="ECO:0000256" key="2">
    <source>
        <dbReference type="SAM" id="MobiDB-lite"/>
    </source>
</evidence>
<sequence length="213" mass="23810">MSTLHKVKAYFGMAPMDDYDDEYYDDVDAPAPRRAPVEDRRYPRRGERFADDAEYGYDEPGYRAGGPAGYADEDRFVSRHAPSREFDRPAPRLGSLRGSAPTRGALAMDPRRAAIFDEGSPLSKITTLRPKDYSEARTIGERFRDGTPVIMDLVSMDNADAKRVVDFAAGLAFALRGSFDKVATKVFLLSPADIDVSAEERRRIAESGFYSYQ</sequence>
<accession>B1MP43</accession>
<gene>
    <name evidence="1" type="primary">sepF</name>
    <name type="ordered locus">MAB_2012</name>
</gene>
<proteinExistence type="inferred from homology"/>
<dbReference type="EMBL" id="CU458896">
    <property type="protein sequence ID" value="CAM62094.1"/>
    <property type="molecule type" value="Genomic_DNA"/>
</dbReference>
<dbReference type="RefSeq" id="WP_005074951.1">
    <property type="nucleotide sequence ID" value="NZ_MLCG01000002.1"/>
</dbReference>
<dbReference type="SMR" id="B1MP43"/>
<dbReference type="GeneID" id="93378950"/>
<dbReference type="KEGG" id="mab:MAB_2012"/>
<dbReference type="Proteomes" id="UP000007137">
    <property type="component" value="Chromosome"/>
</dbReference>
<dbReference type="GO" id="GO:0005737">
    <property type="term" value="C:cytoplasm"/>
    <property type="evidence" value="ECO:0007669"/>
    <property type="project" value="UniProtKB-SubCell"/>
</dbReference>
<dbReference type="GO" id="GO:0000917">
    <property type="term" value="P:division septum assembly"/>
    <property type="evidence" value="ECO:0007669"/>
    <property type="project" value="UniProtKB-KW"/>
</dbReference>
<dbReference type="GO" id="GO:0043093">
    <property type="term" value="P:FtsZ-dependent cytokinesis"/>
    <property type="evidence" value="ECO:0007669"/>
    <property type="project" value="UniProtKB-UniRule"/>
</dbReference>
<dbReference type="FunFam" id="3.30.110.150:FF:000001">
    <property type="entry name" value="Cell division protein SepF"/>
    <property type="match status" value="1"/>
</dbReference>
<dbReference type="Gene3D" id="3.30.110.150">
    <property type="entry name" value="SepF-like protein"/>
    <property type="match status" value="1"/>
</dbReference>
<dbReference type="HAMAP" id="MF_01197">
    <property type="entry name" value="SepF"/>
    <property type="match status" value="1"/>
</dbReference>
<dbReference type="InterPro" id="IPR023052">
    <property type="entry name" value="Cell_div_SepF"/>
</dbReference>
<dbReference type="InterPro" id="IPR007561">
    <property type="entry name" value="Cell_div_SepF/SepF-rel"/>
</dbReference>
<dbReference type="InterPro" id="IPR038594">
    <property type="entry name" value="SepF-like_sf"/>
</dbReference>
<dbReference type="PANTHER" id="PTHR35798">
    <property type="entry name" value="CELL DIVISION PROTEIN SEPF"/>
    <property type="match status" value="1"/>
</dbReference>
<dbReference type="PANTHER" id="PTHR35798:SF1">
    <property type="entry name" value="CELL DIVISION PROTEIN SEPF"/>
    <property type="match status" value="1"/>
</dbReference>
<dbReference type="Pfam" id="PF04472">
    <property type="entry name" value="SepF"/>
    <property type="match status" value="1"/>
</dbReference>
<feature type="chain" id="PRO_1000138473" description="Cell division protein SepF">
    <location>
        <begin position="1"/>
        <end position="213"/>
    </location>
</feature>
<feature type="region of interest" description="Disordered" evidence="2">
    <location>
        <begin position="27"/>
        <end position="103"/>
    </location>
</feature>
<feature type="compositionally biased region" description="Basic and acidic residues" evidence="2">
    <location>
        <begin position="35"/>
        <end position="51"/>
    </location>
</feature>
<feature type="compositionally biased region" description="Basic and acidic residues" evidence="2">
    <location>
        <begin position="72"/>
        <end position="90"/>
    </location>
</feature>
<reference key="1">
    <citation type="journal article" date="2009" name="PLoS ONE">
        <title>Non mycobacterial virulence genes in the genome of the emerging pathogen Mycobacterium abscessus.</title>
        <authorList>
            <person name="Ripoll F."/>
            <person name="Pasek S."/>
            <person name="Schenowitz C."/>
            <person name="Dossat C."/>
            <person name="Barbe V."/>
            <person name="Rottman M."/>
            <person name="Macheras E."/>
            <person name="Heym B."/>
            <person name="Herrmann J.L."/>
            <person name="Daffe M."/>
            <person name="Brosch R."/>
            <person name="Risler J.L."/>
            <person name="Gaillard J.L."/>
        </authorList>
    </citation>
    <scope>NUCLEOTIDE SEQUENCE [LARGE SCALE GENOMIC DNA]</scope>
    <source>
        <strain>ATCC 19977 / DSM 44196 / CCUG 20993 / CIP 104536 / JCM 13569 / NCTC 13031 / TMC 1543 / L948</strain>
    </source>
</reference>
<protein>
    <recommendedName>
        <fullName evidence="1">Cell division protein SepF</fullName>
    </recommendedName>
</protein>
<comment type="function">
    <text evidence="1">Cell division protein that is part of the divisome complex and is recruited early to the Z-ring. Probably stimulates Z-ring formation, perhaps through the cross-linking of FtsZ protofilaments. Its function overlaps with FtsA.</text>
</comment>
<comment type="subunit">
    <text evidence="1">Homodimer. Interacts with FtsZ.</text>
</comment>
<comment type="subcellular location">
    <subcellularLocation>
        <location evidence="1">Cytoplasm</location>
    </subcellularLocation>
    <text evidence="1">Localizes to the division site, in a FtsZ-dependent manner.</text>
</comment>
<comment type="similarity">
    <text evidence="1">Belongs to the SepF family.</text>
</comment>
<keyword id="KW-0131">Cell cycle</keyword>
<keyword id="KW-0132">Cell division</keyword>
<keyword id="KW-0963">Cytoplasm</keyword>
<keyword id="KW-1185">Reference proteome</keyword>
<keyword id="KW-0717">Septation</keyword>
<organism>
    <name type="scientific">Mycobacteroides abscessus (strain ATCC 19977 / DSM 44196 / CCUG 20993 / CIP 104536 / JCM 13569 / NCTC 13031 / TMC 1543 / L948)</name>
    <name type="common">Mycobacterium abscessus</name>
    <dbReference type="NCBI Taxonomy" id="561007"/>
    <lineage>
        <taxon>Bacteria</taxon>
        <taxon>Bacillati</taxon>
        <taxon>Actinomycetota</taxon>
        <taxon>Actinomycetes</taxon>
        <taxon>Mycobacteriales</taxon>
        <taxon>Mycobacteriaceae</taxon>
        <taxon>Mycobacteroides</taxon>
        <taxon>Mycobacteroides abscessus</taxon>
    </lineage>
</organism>
<name>SEPF_MYCA9</name>